<sequence length="687" mass="78243">MKDIFQLVSDYQPAGDQPEAIERLTEGLAAGEMYQTLLGVTGSGKTFTIANMIQQVQRPTIVLAPNKTLAAQLYSEMREFFPRNAVGYFVSYYDYYQPEAYVPASDTYIGKDASVNDHIEQMRLSATKAFLERPDAIVVASVSAIYGLGDKDSYLNMVLHLMVGDTVDHRGILRRLAELQYQRNDRELYRGTYRVRGEIIDIYPAESEQEAIRVELFDDEIESLSYFDPLTGEILHRVSRLTIYPKTHYVTPREVLLQAVDEIKIELAERLEQLYGANKLVEAQRLEQRTRFDIEMILELGYCTGIENYSRFLSRRQPGEAPPTLFDYLPKNALLVIDESHVTVPQLGAMYRGDRARKETLVEYGFRLPSALDNRPLKFEEWEQLAPQTIFVSATPGPYEQQHSGAVIEQVVRPTGLVDPAVEVRPAGSQVDDLLSEIRQRTAADERVLVTVLTKRMAEDLTQYLEQHEVRVRYLHSDIDTVERVEIIRDLRLGKFDVLVGINLLREGLDIPEVSLVAILDADKEGFLRSERSLIQTIGRAARNLHGRAILYGDKVTGSMGRAIAETERRRKKQLAFNETHRIIPRGIQKAVREIIDGVYTPGSGKGHRSPDRVEEKAAEYTRLPPQQLAKRLQQLERQMHKHAQNLEFEQAARLRDEIKRIKGWVFNGADSASAPRQENSQARAIC</sequence>
<dbReference type="EMBL" id="CP000127">
    <property type="protein sequence ID" value="ABA57643.1"/>
    <property type="molecule type" value="Genomic_DNA"/>
</dbReference>
<dbReference type="RefSeq" id="WP_002811091.1">
    <property type="nucleotide sequence ID" value="NC_007484.1"/>
</dbReference>
<dbReference type="SMR" id="Q3JC03"/>
<dbReference type="FunCoup" id="Q3JC03">
    <property type="interactions" value="181"/>
</dbReference>
<dbReference type="STRING" id="323261.Noc_1139"/>
<dbReference type="KEGG" id="noc:Noc_1139"/>
<dbReference type="eggNOG" id="COG0556">
    <property type="taxonomic scope" value="Bacteria"/>
</dbReference>
<dbReference type="HOGENOM" id="CLU_009621_2_1_6"/>
<dbReference type="InParanoid" id="Q3JC03"/>
<dbReference type="Proteomes" id="UP000006838">
    <property type="component" value="Chromosome"/>
</dbReference>
<dbReference type="GO" id="GO:0005737">
    <property type="term" value="C:cytoplasm"/>
    <property type="evidence" value="ECO:0007669"/>
    <property type="project" value="UniProtKB-SubCell"/>
</dbReference>
<dbReference type="GO" id="GO:0009380">
    <property type="term" value="C:excinuclease repair complex"/>
    <property type="evidence" value="ECO:0007669"/>
    <property type="project" value="InterPro"/>
</dbReference>
<dbReference type="GO" id="GO:0005524">
    <property type="term" value="F:ATP binding"/>
    <property type="evidence" value="ECO:0007669"/>
    <property type="project" value="UniProtKB-UniRule"/>
</dbReference>
<dbReference type="GO" id="GO:0016887">
    <property type="term" value="F:ATP hydrolysis activity"/>
    <property type="evidence" value="ECO:0007669"/>
    <property type="project" value="InterPro"/>
</dbReference>
<dbReference type="GO" id="GO:0003677">
    <property type="term" value="F:DNA binding"/>
    <property type="evidence" value="ECO:0007669"/>
    <property type="project" value="UniProtKB-UniRule"/>
</dbReference>
<dbReference type="GO" id="GO:0009381">
    <property type="term" value="F:excinuclease ABC activity"/>
    <property type="evidence" value="ECO:0007669"/>
    <property type="project" value="UniProtKB-UniRule"/>
</dbReference>
<dbReference type="GO" id="GO:0006289">
    <property type="term" value="P:nucleotide-excision repair"/>
    <property type="evidence" value="ECO:0007669"/>
    <property type="project" value="UniProtKB-UniRule"/>
</dbReference>
<dbReference type="GO" id="GO:0009432">
    <property type="term" value="P:SOS response"/>
    <property type="evidence" value="ECO:0007669"/>
    <property type="project" value="UniProtKB-UniRule"/>
</dbReference>
<dbReference type="CDD" id="cd17916">
    <property type="entry name" value="DEXHc_UvrB"/>
    <property type="match status" value="1"/>
</dbReference>
<dbReference type="CDD" id="cd18790">
    <property type="entry name" value="SF2_C_UvrB"/>
    <property type="match status" value="1"/>
</dbReference>
<dbReference type="FunFam" id="3.40.50.300:FF:000477">
    <property type="entry name" value="UvrABC system protein B"/>
    <property type="match status" value="1"/>
</dbReference>
<dbReference type="Gene3D" id="3.40.50.300">
    <property type="entry name" value="P-loop containing nucleotide triphosphate hydrolases"/>
    <property type="match status" value="3"/>
</dbReference>
<dbReference type="Gene3D" id="4.10.860.10">
    <property type="entry name" value="UVR domain"/>
    <property type="match status" value="1"/>
</dbReference>
<dbReference type="HAMAP" id="MF_00204">
    <property type="entry name" value="UvrB"/>
    <property type="match status" value="1"/>
</dbReference>
<dbReference type="InterPro" id="IPR006935">
    <property type="entry name" value="Helicase/UvrB_N"/>
</dbReference>
<dbReference type="InterPro" id="IPR014001">
    <property type="entry name" value="Helicase_ATP-bd"/>
</dbReference>
<dbReference type="InterPro" id="IPR001650">
    <property type="entry name" value="Helicase_C-like"/>
</dbReference>
<dbReference type="InterPro" id="IPR027417">
    <property type="entry name" value="P-loop_NTPase"/>
</dbReference>
<dbReference type="InterPro" id="IPR001943">
    <property type="entry name" value="UVR_dom"/>
</dbReference>
<dbReference type="InterPro" id="IPR036876">
    <property type="entry name" value="UVR_dom_sf"/>
</dbReference>
<dbReference type="InterPro" id="IPR004807">
    <property type="entry name" value="UvrB"/>
</dbReference>
<dbReference type="InterPro" id="IPR041471">
    <property type="entry name" value="UvrB_inter"/>
</dbReference>
<dbReference type="InterPro" id="IPR024759">
    <property type="entry name" value="UvrB_YAD/RRR_dom"/>
</dbReference>
<dbReference type="NCBIfam" id="NF003673">
    <property type="entry name" value="PRK05298.1"/>
    <property type="match status" value="1"/>
</dbReference>
<dbReference type="NCBIfam" id="TIGR00631">
    <property type="entry name" value="uvrb"/>
    <property type="match status" value="1"/>
</dbReference>
<dbReference type="PANTHER" id="PTHR24029">
    <property type="entry name" value="UVRABC SYSTEM PROTEIN B"/>
    <property type="match status" value="1"/>
</dbReference>
<dbReference type="PANTHER" id="PTHR24029:SF0">
    <property type="entry name" value="UVRABC SYSTEM PROTEIN B"/>
    <property type="match status" value="1"/>
</dbReference>
<dbReference type="Pfam" id="PF00271">
    <property type="entry name" value="Helicase_C"/>
    <property type="match status" value="1"/>
</dbReference>
<dbReference type="Pfam" id="PF04851">
    <property type="entry name" value="ResIII"/>
    <property type="match status" value="1"/>
</dbReference>
<dbReference type="Pfam" id="PF02151">
    <property type="entry name" value="UVR"/>
    <property type="match status" value="1"/>
</dbReference>
<dbReference type="Pfam" id="PF12344">
    <property type="entry name" value="UvrB"/>
    <property type="match status" value="1"/>
</dbReference>
<dbReference type="Pfam" id="PF17757">
    <property type="entry name" value="UvrB_inter"/>
    <property type="match status" value="1"/>
</dbReference>
<dbReference type="SMART" id="SM00487">
    <property type="entry name" value="DEXDc"/>
    <property type="match status" value="1"/>
</dbReference>
<dbReference type="SMART" id="SM00490">
    <property type="entry name" value="HELICc"/>
    <property type="match status" value="1"/>
</dbReference>
<dbReference type="SUPFAM" id="SSF46600">
    <property type="entry name" value="C-terminal UvrC-binding domain of UvrB"/>
    <property type="match status" value="1"/>
</dbReference>
<dbReference type="SUPFAM" id="SSF52540">
    <property type="entry name" value="P-loop containing nucleoside triphosphate hydrolases"/>
    <property type="match status" value="2"/>
</dbReference>
<dbReference type="PROSITE" id="PS51192">
    <property type="entry name" value="HELICASE_ATP_BIND_1"/>
    <property type="match status" value="2"/>
</dbReference>
<dbReference type="PROSITE" id="PS51194">
    <property type="entry name" value="HELICASE_CTER"/>
    <property type="match status" value="1"/>
</dbReference>
<dbReference type="PROSITE" id="PS50151">
    <property type="entry name" value="UVR"/>
    <property type="match status" value="1"/>
</dbReference>
<gene>
    <name evidence="1" type="primary">uvrB</name>
    <name type="ordered locus">Noc_1139</name>
</gene>
<keyword id="KW-0067">ATP-binding</keyword>
<keyword id="KW-0963">Cytoplasm</keyword>
<keyword id="KW-0227">DNA damage</keyword>
<keyword id="KW-0228">DNA excision</keyword>
<keyword id="KW-0234">DNA repair</keyword>
<keyword id="KW-0267">Excision nuclease</keyword>
<keyword id="KW-0547">Nucleotide-binding</keyword>
<keyword id="KW-1185">Reference proteome</keyword>
<keyword id="KW-0742">SOS response</keyword>
<proteinExistence type="inferred from homology"/>
<comment type="function">
    <text evidence="1">The UvrABC repair system catalyzes the recognition and processing of DNA lesions. A damage recognition complex composed of 2 UvrA and 2 UvrB subunits scans DNA for abnormalities. Upon binding of the UvrA(2)B(2) complex to a putative damaged site, the DNA wraps around one UvrB monomer. DNA wrap is dependent on ATP binding by UvrB and probably causes local melting of the DNA helix, facilitating insertion of UvrB beta-hairpin between the DNA strands. Then UvrB probes one DNA strand for the presence of a lesion. If a lesion is found the UvrA subunits dissociate and the UvrB-DNA preincision complex is formed. This complex is subsequently bound by UvrC and the second UvrB is released. If no lesion is found, the DNA wraps around the other UvrB subunit that will check the other stand for damage.</text>
</comment>
<comment type="subunit">
    <text evidence="1">Forms a heterotetramer with UvrA during the search for lesions. Interacts with UvrC in an incision complex.</text>
</comment>
<comment type="subcellular location">
    <subcellularLocation>
        <location evidence="1">Cytoplasm</location>
    </subcellularLocation>
</comment>
<comment type="domain">
    <text evidence="1">The beta-hairpin motif is involved in DNA binding.</text>
</comment>
<comment type="similarity">
    <text evidence="1">Belongs to the UvrB family.</text>
</comment>
<reference key="1">
    <citation type="journal article" date="2006" name="Appl. Environ. Microbiol.">
        <title>Complete genome sequence of the marine, chemolithoautotrophic, ammonia-oxidizing bacterium Nitrosococcus oceani ATCC 19707.</title>
        <authorList>
            <person name="Klotz M.G."/>
            <person name="Arp D.J."/>
            <person name="Chain P.S.G."/>
            <person name="El-Sheikh A.F."/>
            <person name="Hauser L.J."/>
            <person name="Hommes N.G."/>
            <person name="Larimer F.W."/>
            <person name="Malfatti S.A."/>
            <person name="Norton J.M."/>
            <person name="Poret-Peterson A.T."/>
            <person name="Vergez L.M."/>
            <person name="Ward B.B."/>
        </authorList>
    </citation>
    <scope>NUCLEOTIDE SEQUENCE [LARGE SCALE GENOMIC DNA]</scope>
    <source>
        <strain>ATCC 19707 / BCRC 17464 / JCM 30415 / NCIMB 11848 / C-107</strain>
    </source>
</reference>
<evidence type="ECO:0000255" key="1">
    <source>
        <dbReference type="HAMAP-Rule" id="MF_00204"/>
    </source>
</evidence>
<organism>
    <name type="scientific">Nitrosococcus oceani (strain ATCC 19707 / BCRC 17464 / JCM 30415 / NCIMB 11848 / C-107)</name>
    <dbReference type="NCBI Taxonomy" id="323261"/>
    <lineage>
        <taxon>Bacteria</taxon>
        <taxon>Pseudomonadati</taxon>
        <taxon>Pseudomonadota</taxon>
        <taxon>Gammaproteobacteria</taxon>
        <taxon>Chromatiales</taxon>
        <taxon>Chromatiaceae</taxon>
        <taxon>Nitrosococcus</taxon>
    </lineage>
</organism>
<protein>
    <recommendedName>
        <fullName evidence="1">UvrABC system protein B</fullName>
        <shortName evidence="1">Protein UvrB</shortName>
    </recommendedName>
    <alternativeName>
        <fullName evidence="1">Excinuclease ABC subunit B</fullName>
    </alternativeName>
</protein>
<accession>Q3JC03</accession>
<name>UVRB_NITOC</name>
<feature type="chain" id="PRO_0000227333" description="UvrABC system protein B">
    <location>
        <begin position="1"/>
        <end position="687"/>
    </location>
</feature>
<feature type="domain" description="Helicase ATP-binding" evidence="1">
    <location>
        <begin position="26"/>
        <end position="414"/>
    </location>
</feature>
<feature type="domain" description="Helicase C-terminal" evidence="1">
    <location>
        <begin position="430"/>
        <end position="596"/>
    </location>
</feature>
<feature type="domain" description="UVR" evidence="1">
    <location>
        <begin position="630"/>
        <end position="665"/>
    </location>
</feature>
<feature type="short sequence motif" description="Beta-hairpin">
    <location>
        <begin position="92"/>
        <end position="115"/>
    </location>
</feature>
<feature type="binding site" evidence="1">
    <location>
        <begin position="39"/>
        <end position="46"/>
    </location>
    <ligand>
        <name>ATP</name>
        <dbReference type="ChEBI" id="CHEBI:30616"/>
    </ligand>
</feature>